<feature type="chain" id="PRO_1000119296" description="Glycine cleavage system H protein">
    <location>
        <begin position="1"/>
        <end position="132"/>
    </location>
</feature>
<feature type="domain" description="Lipoyl-binding" evidence="2">
    <location>
        <begin position="24"/>
        <end position="106"/>
    </location>
</feature>
<feature type="modified residue" description="N6-lipoyllysine" evidence="1">
    <location>
        <position position="65"/>
    </location>
</feature>
<accession>B7K3J2</accession>
<name>GCSH_RIPO1</name>
<proteinExistence type="inferred from homology"/>
<evidence type="ECO:0000255" key="1">
    <source>
        <dbReference type="HAMAP-Rule" id="MF_00272"/>
    </source>
</evidence>
<evidence type="ECO:0000255" key="2">
    <source>
        <dbReference type="PROSITE-ProRule" id="PRU01066"/>
    </source>
</evidence>
<comment type="function">
    <text evidence="1">The glycine cleavage system catalyzes the degradation of glycine. The H protein shuttles the methylamine group of glycine from the P protein to the T protein.</text>
</comment>
<comment type="cofactor">
    <cofactor evidence="1">
        <name>(R)-lipoate</name>
        <dbReference type="ChEBI" id="CHEBI:83088"/>
    </cofactor>
    <text evidence="1">Binds 1 lipoyl cofactor covalently.</text>
</comment>
<comment type="subunit">
    <text evidence="1">The glycine cleavage system is composed of four proteins: P, T, L and H.</text>
</comment>
<comment type="similarity">
    <text evidence="1">Belongs to the GcvH family.</text>
</comment>
<protein>
    <recommendedName>
        <fullName evidence="1">Glycine cleavage system H protein</fullName>
    </recommendedName>
</protein>
<dbReference type="EMBL" id="CP001287">
    <property type="protein sequence ID" value="ACK65334.1"/>
    <property type="molecule type" value="Genomic_DNA"/>
</dbReference>
<dbReference type="RefSeq" id="WP_012594608.1">
    <property type="nucleotide sequence ID" value="NC_011726.1"/>
</dbReference>
<dbReference type="SMR" id="B7K3J2"/>
<dbReference type="STRING" id="41431.PCC8801_1269"/>
<dbReference type="KEGG" id="cyp:PCC8801_1269"/>
<dbReference type="eggNOG" id="COG0509">
    <property type="taxonomic scope" value="Bacteria"/>
</dbReference>
<dbReference type="HOGENOM" id="CLU_097408_2_2_3"/>
<dbReference type="OrthoDB" id="9796712at2"/>
<dbReference type="Proteomes" id="UP000008204">
    <property type="component" value="Chromosome"/>
</dbReference>
<dbReference type="GO" id="GO:0005829">
    <property type="term" value="C:cytosol"/>
    <property type="evidence" value="ECO:0007669"/>
    <property type="project" value="TreeGrafter"/>
</dbReference>
<dbReference type="GO" id="GO:0005960">
    <property type="term" value="C:glycine cleavage complex"/>
    <property type="evidence" value="ECO:0007669"/>
    <property type="project" value="InterPro"/>
</dbReference>
<dbReference type="GO" id="GO:0019464">
    <property type="term" value="P:glycine decarboxylation via glycine cleavage system"/>
    <property type="evidence" value="ECO:0007669"/>
    <property type="project" value="UniProtKB-UniRule"/>
</dbReference>
<dbReference type="CDD" id="cd06848">
    <property type="entry name" value="GCS_H"/>
    <property type="match status" value="1"/>
</dbReference>
<dbReference type="Gene3D" id="2.40.50.100">
    <property type="match status" value="1"/>
</dbReference>
<dbReference type="HAMAP" id="MF_00272">
    <property type="entry name" value="GcvH"/>
    <property type="match status" value="1"/>
</dbReference>
<dbReference type="InterPro" id="IPR003016">
    <property type="entry name" value="2-oxoA_DH_lipoyl-BS"/>
</dbReference>
<dbReference type="InterPro" id="IPR000089">
    <property type="entry name" value="Biotin_lipoyl"/>
</dbReference>
<dbReference type="InterPro" id="IPR002930">
    <property type="entry name" value="GCV_H"/>
</dbReference>
<dbReference type="InterPro" id="IPR033753">
    <property type="entry name" value="GCV_H/Fam206"/>
</dbReference>
<dbReference type="InterPro" id="IPR017453">
    <property type="entry name" value="GCV_H_sub"/>
</dbReference>
<dbReference type="InterPro" id="IPR011053">
    <property type="entry name" value="Single_hybrid_motif"/>
</dbReference>
<dbReference type="NCBIfam" id="TIGR00527">
    <property type="entry name" value="gcvH"/>
    <property type="match status" value="1"/>
</dbReference>
<dbReference type="NCBIfam" id="NF002270">
    <property type="entry name" value="PRK01202.1"/>
    <property type="match status" value="1"/>
</dbReference>
<dbReference type="PANTHER" id="PTHR11715">
    <property type="entry name" value="GLYCINE CLEAVAGE SYSTEM H PROTEIN"/>
    <property type="match status" value="1"/>
</dbReference>
<dbReference type="PANTHER" id="PTHR11715:SF3">
    <property type="entry name" value="GLYCINE CLEAVAGE SYSTEM H PROTEIN-RELATED"/>
    <property type="match status" value="1"/>
</dbReference>
<dbReference type="Pfam" id="PF01597">
    <property type="entry name" value="GCV_H"/>
    <property type="match status" value="1"/>
</dbReference>
<dbReference type="SUPFAM" id="SSF51230">
    <property type="entry name" value="Single hybrid motif"/>
    <property type="match status" value="1"/>
</dbReference>
<dbReference type="PROSITE" id="PS50968">
    <property type="entry name" value="BIOTINYL_LIPOYL"/>
    <property type="match status" value="1"/>
</dbReference>
<dbReference type="PROSITE" id="PS00189">
    <property type="entry name" value="LIPOYL"/>
    <property type="match status" value="1"/>
</dbReference>
<organism>
    <name type="scientific">Rippkaea orientalis (strain PCC 8801 / RF-1)</name>
    <name type="common">Cyanothece sp. (strain PCC 8801)</name>
    <dbReference type="NCBI Taxonomy" id="41431"/>
    <lineage>
        <taxon>Bacteria</taxon>
        <taxon>Bacillati</taxon>
        <taxon>Cyanobacteriota</taxon>
        <taxon>Cyanophyceae</taxon>
        <taxon>Oscillatoriophycideae</taxon>
        <taxon>Chroococcales</taxon>
        <taxon>Aphanothecaceae</taxon>
        <taxon>Rippkaea</taxon>
        <taxon>Rippkaea orientalis</taxon>
    </lineage>
</organism>
<keyword id="KW-0450">Lipoyl</keyword>
<keyword id="KW-1185">Reference proteome</keyword>
<gene>
    <name evidence="1" type="primary">gcvH</name>
    <name type="ordered locus">PCC8801_1269</name>
</gene>
<sequence length="132" mass="14589">MDLEYPDDLRYLDSHEYVRLDGEIATIGLSAFAIEQLGDIVHLELPEVGEALEKGESFGAIESVKAAEDLYPPVSGTVIDRNEEMIENPDQLADDPYGDGWLIKVRVSNLDAELDDTLSASEYQAQLEGDDD</sequence>
<reference key="1">
    <citation type="journal article" date="2011" name="MBio">
        <title>Novel metabolic attributes of the genus Cyanothece, comprising a group of unicellular nitrogen-fixing Cyanobacteria.</title>
        <authorList>
            <person name="Bandyopadhyay A."/>
            <person name="Elvitigala T."/>
            <person name="Welsh E."/>
            <person name="Stockel J."/>
            <person name="Liberton M."/>
            <person name="Min H."/>
            <person name="Sherman L.A."/>
            <person name="Pakrasi H.B."/>
        </authorList>
    </citation>
    <scope>NUCLEOTIDE SEQUENCE [LARGE SCALE GENOMIC DNA]</scope>
    <source>
        <strain>PCC 8801 / RF-1</strain>
    </source>
</reference>